<gene>
    <name evidence="1" type="primary">leuC</name>
    <name type="ordered locus">Mkms_1967</name>
</gene>
<accession>A1UEA8</accession>
<dbReference type="EC" id="4.2.1.33" evidence="1"/>
<dbReference type="EMBL" id="CP000518">
    <property type="protein sequence ID" value="ABL91166.1"/>
    <property type="molecule type" value="Genomic_DNA"/>
</dbReference>
<dbReference type="SMR" id="A1UEA8"/>
<dbReference type="STRING" id="189918.Mkms_1967"/>
<dbReference type="KEGG" id="mkm:Mkms_1967"/>
<dbReference type="HOGENOM" id="CLU_006714_3_4_11"/>
<dbReference type="OrthoDB" id="9802769at2"/>
<dbReference type="UniPathway" id="UPA00048">
    <property type="reaction ID" value="UER00071"/>
</dbReference>
<dbReference type="GO" id="GO:0003861">
    <property type="term" value="F:3-isopropylmalate dehydratase activity"/>
    <property type="evidence" value="ECO:0007669"/>
    <property type="project" value="UniProtKB-UniRule"/>
</dbReference>
<dbReference type="GO" id="GO:0051539">
    <property type="term" value="F:4 iron, 4 sulfur cluster binding"/>
    <property type="evidence" value="ECO:0007669"/>
    <property type="project" value="UniProtKB-KW"/>
</dbReference>
<dbReference type="GO" id="GO:0046872">
    <property type="term" value="F:metal ion binding"/>
    <property type="evidence" value="ECO:0007669"/>
    <property type="project" value="UniProtKB-KW"/>
</dbReference>
<dbReference type="GO" id="GO:0009098">
    <property type="term" value="P:L-leucine biosynthetic process"/>
    <property type="evidence" value="ECO:0007669"/>
    <property type="project" value="UniProtKB-UniRule"/>
</dbReference>
<dbReference type="CDD" id="cd01583">
    <property type="entry name" value="IPMI"/>
    <property type="match status" value="1"/>
</dbReference>
<dbReference type="FunFam" id="3.30.499.10:FF:000007">
    <property type="entry name" value="3-isopropylmalate dehydratase large subunit"/>
    <property type="match status" value="1"/>
</dbReference>
<dbReference type="Gene3D" id="3.30.499.10">
    <property type="entry name" value="Aconitase, domain 3"/>
    <property type="match status" value="2"/>
</dbReference>
<dbReference type="HAMAP" id="MF_01026">
    <property type="entry name" value="LeuC_type1"/>
    <property type="match status" value="1"/>
</dbReference>
<dbReference type="InterPro" id="IPR004430">
    <property type="entry name" value="3-IsopropMal_deHydase_lsu"/>
</dbReference>
<dbReference type="InterPro" id="IPR015931">
    <property type="entry name" value="Acnase/IPM_dHydase_lsu_aba_1/3"/>
</dbReference>
<dbReference type="InterPro" id="IPR001030">
    <property type="entry name" value="Acoase/IPM_deHydtase_lsu_aba"/>
</dbReference>
<dbReference type="InterPro" id="IPR018136">
    <property type="entry name" value="Aconitase_4Fe-4S_BS"/>
</dbReference>
<dbReference type="InterPro" id="IPR036008">
    <property type="entry name" value="Aconitase_4Fe-4S_dom"/>
</dbReference>
<dbReference type="InterPro" id="IPR050067">
    <property type="entry name" value="IPM_dehydratase_rel_enz"/>
</dbReference>
<dbReference type="InterPro" id="IPR033941">
    <property type="entry name" value="IPMI_cat"/>
</dbReference>
<dbReference type="NCBIfam" id="TIGR00170">
    <property type="entry name" value="leuC"/>
    <property type="match status" value="1"/>
</dbReference>
<dbReference type="NCBIfam" id="NF004016">
    <property type="entry name" value="PRK05478.1"/>
    <property type="match status" value="1"/>
</dbReference>
<dbReference type="NCBIfam" id="NF009116">
    <property type="entry name" value="PRK12466.1"/>
    <property type="match status" value="1"/>
</dbReference>
<dbReference type="PANTHER" id="PTHR43822:SF9">
    <property type="entry name" value="3-ISOPROPYLMALATE DEHYDRATASE"/>
    <property type="match status" value="1"/>
</dbReference>
<dbReference type="PANTHER" id="PTHR43822">
    <property type="entry name" value="HOMOACONITASE, MITOCHONDRIAL-RELATED"/>
    <property type="match status" value="1"/>
</dbReference>
<dbReference type="Pfam" id="PF00330">
    <property type="entry name" value="Aconitase"/>
    <property type="match status" value="1"/>
</dbReference>
<dbReference type="PRINTS" id="PR00415">
    <property type="entry name" value="ACONITASE"/>
</dbReference>
<dbReference type="SUPFAM" id="SSF53732">
    <property type="entry name" value="Aconitase iron-sulfur domain"/>
    <property type="match status" value="1"/>
</dbReference>
<dbReference type="PROSITE" id="PS00450">
    <property type="entry name" value="ACONITASE_1"/>
    <property type="match status" value="1"/>
</dbReference>
<dbReference type="PROSITE" id="PS01244">
    <property type="entry name" value="ACONITASE_2"/>
    <property type="match status" value="1"/>
</dbReference>
<organism>
    <name type="scientific">Mycobacterium sp. (strain KMS)</name>
    <dbReference type="NCBI Taxonomy" id="189918"/>
    <lineage>
        <taxon>Bacteria</taxon>
        <taxon>Bacillati</taxon>
        <taxon>Actinomycetota</taxon>
        <taxon>Actinomycetes</taxon>
        <taxon>Mycobacteriales</taxon>
        <taxon>Mycobacteriaceae</taxon>
        <taxon>Mycobacterium</taxon>
    </lineage>
</organism>
<proteinExistence type="inferred from homology"/>
<reference key="1">
    <citation type="submission" date="2006-12" db="EMBL/GenBank/DDBJ databases">
        <title>Complete sequence of chromosome of Mycobacterium sp. KMS.</title>
        <authorList>
            <consortium name="US DOE Joint Genome Institute"/>
            <person name="Copeland A."/>
            <person name="Lucas S."/>
            <person name="Lapidus A."/>
            <person name="Barry K."/>
            <person name="Detter J.C."/>
            <person name="Glavina del Rio T."/>
            <person name="Hammon N."/>
            <person name="Israni S."/>
            <person name="Dalin E."/>
            <person name="Tice H."/>
            <person name="Pitluck S."/>
            <person name="Kiss H."/>
            <person name="Brettin T."/>
            <person name="Bruce D."/>
            <person name="Han C."/>
            <person name="Tapia R."/>
            <person name="Gilna P."/>
            <person name="Schmutz J."/>
            <person name="Larimer F."/>
            <person name="Land M."/>
            <person name="Hauser L."/>
            <person name="Kyrpides N."/>
            <person name="Mikhailova N."/>
            <person name="Miller C.D."/>
            <person name="Richardson P."/>
        </authorList>
    </citation>
    <scope>NUCLEOTIDE SEQUENCE [LARGE SCALE GENOMIC DNA]</scope>
    <source>
        <strain>KMS</strain>
    </source>
</reference>
<comment type="function">
    <text evidence="1">Catalyzes the isomerization between 2-isopropylmalate and 3-isopropylmalate, via the formation of 2-isopropylmaleate.</text>
</comment>
<comment type="catalytic activity">
    <reaction evidence="1">
        <text>(2R,3S)-3-isopropylmalate = (2S)-2-isopropylmalate</text>
        <dbReference type="Rhea" id="RHEA:32287"/>
        <dbReference type="ChEBI" id="CHEBI:1178"/>
        <dbReference type="ChEBI" id="CHEBI:35121"/>
        <dbReference type="EC" id="4.2.1.33"/>
    </reaction>
</comment>
<comment type="cofactor">
    <cofactor evidence="1">
        <name>[4Fe-4S] cluster</name>
        <dbReference type="ChEBI" id="CHEBI:49883"/>
    </cofactor>
    <text evidence="1">Binds 1 [4Fe-4S] cluster per subunit.</text>
</comment>
<comment type="pathway">
    <text evidence="1">Amino-acid biosynthesis; L-leucine biosynthesis; L-leucine from 3-methyl-2-oxobutanoate: step 2/4.</text>
</comment>
<comment type="subunit">
    <text evidence="1">Heterodimer of LeuC and LeuD.</text>
</comment>
<comment type="similarity">
    <text evidence="1">Belongs to the aconitase/IPM isomerase family. LeuC type 1 subfamily.</text>
</comment>
<name>LEUC_MYCSK</name>
<evidence type="ECO:0000255" key="1">
    <source>
        <dbReference type="HAMAP-Rule" id="MF_01026"/>
    </source>
</evidence>
<evidence type="ECO:0000256" key="2">
    <source>
        <dbReference type="SAM" id="MobiDB-lite"/>
    </source>
</evidence>
<feature type="chain" id="PRO_0000319820" description="3-isopropylmalate dehydratase large subunit">
    <location>
        <begin position="1"/>
        <end position="481"/>
    </location>
</feature>
<feature type="region of interest" description="Disordered" evidence="2">
    <location>
        <begin position="429"/>
        <end position="451"/>
    </location>
</feature>
<feature type="compositionally biased region" description="Polar residues" evidence="2">
    <location>
        <begin position="429"/>
        <end position="441"/>
    </location>
</feature>
<feature type="binding site" evidence="1">
    <location>
        <position position="357"/>
    </location>
    <ligand>
        <name>[4Fe-4S] cluster</name>
        <dbReference type="ChEBI" id="CHEBI:49883"/>
    </ligand>
</feature>
<feature type="binding site" evidence="1">
    <location>
        <position position="417"/>
    </location>
    <ligand>
        <name>[4Fe-4S] cluster</name>
        <dbReference type="ChEBI" id="CHEBI:49883"/>
    </ligand>
</feature>
<feature type="binding site" evidence="1">
    <location>
        <position position="420"/>
    </location>
    <ligand>
        <name>[4Fe-4S] cluster</name>
        <dbReference type="ChEBI" id="CHEBI:49883"/>
    </ligand>
</feature>
<keyword id="KW-0004">4Fe-4S</keyword>
<keyword id="KW-0028">Amino-acid biosynthesis</keyword>
<keyword id="KW-0100">Branched-chain amino acid biosynthesis</keyword>
<keyword id="KW-0408">Iron</keyword>
<keyword id="KW-0411">Iron-sulfur</keyword>
<keyword id="KW-0432">Leucine biosynthesis</keyword>
<keyword id="KW-0456">Lyase</keyword>
<keyword id="KW-0479">Metal-binding</keyword>
<sequence length="481" mass="51016">MAQPATPRTMAEKVWADHVVAHGIGEGAAREPDLIYIDLHLVHEVTSPQAFDGLRLANRPVRRPDLTIATEDHNVPTVDIDKPIADPVSRTQVETLRRNCAEFGIRLHPMGDAEQGIVHIIGPQLGLTQPGMTVVCGDSHTSTHGAFGALAMGIGTSEVEHVLATQTLPLRPFRTMAVNVDGELPPGVSAKDIILAVIAKIGTGGGQGHVIEYRGSAIESLSMEGRMTICNMSIEAGARAGMVAPDDTTFEFLRGRPHAPTGADWDAAVEAWRQLRTDPGAEFDTEVHLDAAELSPFVTWGTNPGQGVPLSGAVPDPELIVDEGERQAAEKALTYMGLQAGTAMRDVAVDTVFVGSCTNGRIEDLRVVADVLRGRRVADGIRMLVVPGSMRVRAQAESEGLDRIFIDAGAEWRQAGCSMCLGMNPDQLSPGQRCASTSNRNFEGRQGKGGRTHLVSPAVAAATAVRGTLSSPADLSAVPAR</sequence>
<protein>
    <recommendedName>
        <fullName evidence="1">3-isopropylmalate dehydratase large subunit</fullName>
        <ecNumber evidence="1">4.2.1.33</ecNumber>
    </recommendedName>
    <alternativeName>
        <fullName evidence="1">Alpha-IPM isomerase</fullName>
        <shortName evidence="1">IPMI</shortName>
    </alternativeName>
    <alternativeName>
        <fullName evidence="1">Isopropylmalate isomerase</fullName>
    </alternativeName>
</protein>